<dbReference type="EMBL" id="CP000300">
    <property type="protein sequence ID" value="ABE52262.1"/>
    <property type="molecule type" value="Genomic_DNA"/>
</dbReference>
<dbReference type="RefSeq" id="WP_011499407.1">
    <property type="nucleotide sequence ID" value="NC_007955.1"/>
</dbReference>
<dbReference type="SMR" id="Q12WB4"/>
<dbReference type="STRING" id="259564.Mbur_1344"/>
<dbReference type="GeneID" id="3997560"/>
<dbReference type="KEGG" id="mbu:Mbur_1344"/>
<dbReference type="HOGENOM" id="CLU_095686_1_1_2"/>
<dbReference type="OrthoDB" id="25187at2157"/>
<dbReference type="Proteomes" id="UP000001979">
    <property type="component" value="Chromosome"/>
</dbReference>
<dbReference type="Gene3D" id="3.30.700.20">
    <property type="entry name" value="Hypothetical protein ph0010, domain 1"/>
    <property type="match status" value="1"/>
</dbReference>
<dbReference type="Gene3D" id="3.30.1490.150">
    <property type="entry name" value="Hypothetical protein ph0010, domain 2"/>
    <property type="match status" value="1"/>
</dbReference>
<dbReference type="HAMAP" id="MF_00645">
    <property type="entry name" value="AMMECR1"/>
    <property type="match status" value="1"/>
</dbReference>
<dbReference type="InterPro" id="IPR023473">
    <property type="entry name" value="AMMECR1"/>
</dbReference>
<dbReference type="InterPro" id="IPR036071">
    <property type="entry name" value="AMMECR1_dom_sf"/>
</dbReference>
<dbReference type="InterPro" id="IPR002733">
    <property type="entry name" value="AMMECR1_domain"/>
</dbReference>
<dbReference type="InterPro" id="IPR027485">
    <property type="entry name" value="AMMECR1_N"/>
</dbReference>
<dbReference type="InterPro" id="IPR027623">
    <property type="entry name" value="AmmeMemoSam_A"/>
</dbReference>
<dbReference type="InterPro" id="IPR023472">
    <property type="entry name" value="Uncharacterised_MJ0810"/>
</dbReference>
<dbReference type="NCBIfam" id="TIGR04335">
    <property type="entry name" value="AmmeMemoSam_A"/>
    <property type="match status" value="1"/>
</dbReference>
<dbReference type="NCBIfam" id="NF002000">
    <property type="entry name" value="PRK00801.1"/>
    <property type="match status" value="1"/>
</dbReference>
<dbReference type="NCBIfam" id="TIGR00296">
    <property type="entry name" value="TIGR00296 family protein"/>
    <property type="match status" value="1"/>
</dbReference>
<dbReference type="PANTHER" id="PTHR13016:SF0">
    <property type="entry name" value="AMME SYNDROME CANDIDATE GENE 1 PROTEIN"/>
    <property type="match status" value="1"/>
</dbReference>
<dbReference type="PANTHER" id="PTHR13016">
    <property type="entry name" value="AMMECR1 HOMOLOG"/>
    <property type="match status" value="1"/>
</dbReference>
<dbReference type="Pfam" id="PF01871">
    <property type="entry name" value="AMMECR1"/>
    <property type="match status" value="1"/>
</dbReference>
<dbReference type="SUPFAM" id="SSF143447">
    <property type="entry name" value="AMMECR1-like"/>
    <property type="match status" value="1"/>
</dbReference>
<dbReference type="PROSITE" id="PS51112">
    <property type="entry name" value="AMMECR1"/>
    <property type="match status" value="1"/>
</dbReference>
<accession>Q12WB4</accession>
<gene>
    <name type="ordered locus">Mbur_1344</name>
</gene>
<protein>
    <recommendedName>
        <fullName evidence="1">Protein Mbur_1344</fullName>
    </recommendedName>
</protein>
<feature type="chain" id="PRO_1000082707" description="Protein Mbur_1344">
    <location>
        <begin position="1"/>
        <end position="200"/>
    </location>
</feature>
<feature type="domain" description="AMMECR1" evidence="1">
    <location>
        <begin position="5"/>
        <end position="192"/>
    </location>
</feature>
<sequence>MLSASEGEQTVRLARNTIESFLKDGEQSDSIDLPEVFGELRGVFVTLTKNGNLRGCIGHPYADSVLESAIVDSAISAATRDPRFPMVDISEMSDIIVEVTVLTQPELVDVLPDKLPEVIEIGRHGLIAKMGMYQGLLLPQVAPENDFDAIDLLNHTCLKAGLPQDAWLTGAQMYWFEGQIFKEVEPRGDIEENKFNSCCK</sequence>
<evidence type="ECO:0000255" key="1">
    <source>
        <dbReference type="HAMAP-Rule" id="MF_00645"/>
    </source>
</evidence>
<reference key="1">
    <citation type="journal article" date="2009" name="ISME J.">
        <title>The genome sequence of the psychrophilic archaeon, Methanococcoides burtonii: the role of genome evolution in cold adaptation.</title>
        <authorList>
            <person name="Allen M.A."/>
            <person name="Lauro F.M."/>
            <person name="Williams T.J."/>
            <person name="Burg D."/>
            <person name="Siddiqui K.S."/>
            <person name="De Francisci D."/>
            <person name="Chong K.W."/>
            <person name="Pilak O."/>
            <person name="Chew H.H."/>
            <person name="De Maere M.Z."/>
            <person name="Ting L."/>
            <person name="Katrib M."/>
            <person name="Ng C."/>
            <person name="Sowers K.R."/>
            <person name="Galperin M.Y."/>
            <person name="Anderson I.J."/>
            <person name="Ivanova N."/>
            <person name="Dalin E."/>
            <person name="Martinez M."/>
            <person name="Lapidus A."/>
            <person name="Hauser L."/>
            <person name="Land M."/>
            <person name="Thomas T."/>
            <person name="Cavicchioli R."/>
        </authorList>
    </citation>
    <scope>NUCLEOTIDE SEQUENCE [LARGE SCALE GENOMIC DNA]</scope>
    <source>
        <strain>DSM 6242 / NBRC 107633 / OCM 468 / ACE-M</strain>
    </source>
</reference>
<name>Y1344_METBU</name>
<organism>
    <name type="scientific">Methanococcoides burtonii (strain DSM 6242 / NBRC 107633 / OCM 468 / ACE-M)</name>
    <dbReference type="NCBI Taxonomy" id="259564"/>
    <lineage>
        <taxon>Archaea</taxon>
        <taxon>Methanobacteriati</taxon>
        <taxon>Methanobacteriota</taxon>
        <taxon>Stenosarchaea group</taxon>
        <taxon>Methanomicrobia</taxon>
        <taxon>Methanosarcinales</taxon>
        <taxon>Methanosarcinaceae</taxon>
        <taxon>Methanococcoides</taxon>
    </lineage>
</organism>
<proteinExistence type="inferred from homology"/>